<proteinExistence type="inferred from homology"/>
<sequence length="70" mass="7168">MGAIAAGIAMFGAALGAGIGNGLVISKMLEGMARQPELSGQLRTNMFIGVGLIESMPIISFVVALMVMNK</sequence>
<comment type="function">
    <text evidence="1">F(1)F(0) ATP synthase produces ATP from ADP in the presence of a proton or sodium gradient. F-type ATPases consist of two structural domains, F(1) containing the extramembraneous catalytic core and F(0) containing the membrane proton channel, linked together by a central stalk and a peripheral stalk. During catalysis, ATP synthesis in the catalytic domain of F(1) is coupled via a rotary mechanism of the central stalk subunits to proton translocation.</text>
</comment>
<comment type="function">
    <text evidence="1">Key component of the F(0) channel; it plays a direct role in translocation across the membrane. A homomeric c-ring of between 10-14 subunits forms the central stalk rotor element with the F(1) delta and epsilon subunits.</text>
</comment>
<comment type="subunit">
    <text evidence="1">F-type ATPases have 2 components, F(1) - the catalytic core - and F(0) - the membrane proton channel. F(1) has five subunits: alpha(3), beta(3), gamma(1), delta(1), epsilon(1). F(0) has three main subunits: a(1), b(2) and c(10-14). The alpha and beta chains form an alternating ring which encloses part of the gamma chain. F(1) is attached to F(0) by a central stalk formed by the gamma and epsilon chains, while a peripheral stalk is formed by the delta and b chains.</text>
</comment>
<comment type="subcellular location">
    <subcellularLocation>
        <location evidence="1">Cell membrane</location>
        <topology evidence="1">Multi-pass membrane protein</topology>
    </subcellularLocation>
</comment>
<comment type="similarity">
    <text evidence="1">Belongs to the ATPase C chain family.</text>
</comment>
<evidence type="ECO:0000255" key="1">
    <source>
        <dbReference type="HAMAP-Rule" id="MF_01396"/>
    </source>
</evidence>
<gene>
    <name evidence="1" type="primary">atpE</name>
    <name type="ordered locus">lp_2369</name>
</gene>
<feature type="chain" id="PRO_1000184407" description="ATP synthase subunit c">
    <location>
        <begin position="1"/>
        <end position="70"/>
    </location>
</feature>
<feature type="transmembrane region" description="Helical" evidence="1">
    <location>
        <begin position="4"/>
        <end position="24"/>
    </location>
</feature>
<feature type="transmembrane region" description="Helical" evidence="1">
    <location>
        <begin position="47"/>
        <end position="67"/>
    </location>
</feature>
<feature type="site" description="Reversibly protonated during proton transport" evidence="1">
    <location>
        <position position="54"/>
    </location>
</feature>
<accession>Q88UT8</accession>
<accession>F9UQR8</accession>
<name>ATPL_LACPL</name>
<organism>
    <name type="scientific">Lactiplantibacillus plantarum (strain ATCC BAA-793 / NCIMB 8826 / WCFS1)</name>
    <name type="common">Lactobacillus plantarum</name>
    <dbReference type="NCBI Taxonomy" id="220668"/>
    <lineage>
        <taxon>Bacteria</taxon>
        <taxon>Bacillati</taxon>
        <taxon>Bacillota</taxon>
        <taxon>Bacilli</taxon>
        <taxon>Lactobacillales</taxon>
        <taxon>Lactobacillaceae</taxon>
        <taxon>Lactiplantibacillus</taxon>
    </lineage>
</organism>
<dbReference type="EMBL" id="AL935263">
    <property type="protein sequence ID" value="CCC79557.1"/>
    <property type="molecule type" value="Genomic_DNA"/>
</dbReference>
<dbReference type="RefSeq" id="WP_003639224.1">
    <property type="nucleotide sequence ID" value="NC_004567.2"/>
</dbReference>
<dbReference type="RefSeq" id="YP_004890071.1">
    <property type="nucleotide sequence ID" value="NC_004567.2"/>
</dbReference>
<dbReference type="SMR" id="Q88UT8"/>
<dbReference type="STRING" id="220668.lp_2369"/>
<dbReference type="EnsemblBacteria" id="CCC79557">
    <property type="protein sequence ID" value="CCC79557"/>
    <property type="gene ID" value="lp_2369"/>
</dbReference>
<dbReference type="GeneID" id="89669626"/>
<dbReference type="KEGG" id="lpl:lp_2369"/>
<dbReference type="PATRIC" id="fig|220668.9.peg.2002"/>
<dbReference type="eggNOG" id="COG0636">
    <property type="taxonomic scope" value="Bacteria"/>
</dbReference>
<dbReference type="HOGENOM" id="CLU_148047_1_1_9"/>
<dbReference type="OrthoDB" id="2357540at2"/>
<dbReference type="PhylomeDB" id="Q88UT8"/>
<dbReference type="Proteomes" id="UP000000432">
    <property type="component" value="Chromosome"/>
</dbReference>
<dbReference type="GO" id="GO:0005886">
    <property type="term" value="C:plasma membrane"/>
    <property type="evidence" value="ECO:0007669"/>
    <property type="project" value="UniProtKB-SubCell"/>
</dbReference>
<dbReference type="GO" id="GO:0045259">
    <property type="term" value="C:proton-transporting ATP synthase complex"/>
    <property type="evidence" value="ECO:0007669"/>
    <property type="project" value="UniProtKB-KW"/>
</dbReference>
<dbReference type="GO" id="GO:0033177">
    <property type="term" value="C:proton-transporting two-sector ATPase complex, proton-transporting domain"/>
    <property type="evidence" value="ECO:0007669"/>
    <property type="project" value="InterPro"/>
</dbReference>
<dbReference type="GO" id="GO:0008289">
    <property type="term" value="F:lipid binding"/>
    <property type="evidence" value="ECO:0007669"/>
    <property type="project" value="UniProtKB-KW"/>
</dbReference>
<dbReference type="GO" id="GO:0046933">
    <property type="term" value="F:proton-transporting ATP synthase activity, rotational mechanism"/>
    <property type="evidence" value="ECO:0007669"/>
    <property type="project" value="UniProtKB-UniRule"/>
</dbReference>
<dbReference type="CDD" id="cd18185">
    <property type="entry name" value="ATP-synt_Fo_c_ATPE"/>
    <property type="match status" value="1"/>
</dbReference>
<dbReference type="FunFam" id="1.20.20.10:FF:000004">
    <property type="entry name" value="ATP synthase subunit c"/>
    <property type="match status" value="1"/>
</dbReference>
<dbReference type="Gene3D" id="1.20.20.10">
    <property type="entry name" value="F1F0 ATP synthase subunit C"/>
    <property type="match status" value="1"/>
</dbReference>
<dbReference type="HAMAP" id="MF_01396">
    <property type="entry name" value="ATP_synth_c_bact"/>
    <property type="match status" value="1"/>
</dbReference>
<dbReference type="InterPro" id="IPR005953">
    <property type="entry name" value="ATP_synth_csu_bac/chlpt"/>
</dbReference>
<dbReference type="InterPro" id="IPR000454">
    <property type="entry name" value="ATP_synth_F0_csu"/>
</dbReference>
<dbReference type="InterPro" id="IPR020537">
    <property type="entry name" value="ATP_synth_F0_csu_DDCD_BS"/>
</dbReference>
<dbReference type="InterPro" id="IPR038662">
    <property type="entry name" value="ATP_synth_F0_csu_sf"/>
</dbReference>
<dbReference type="InterPro" id="IPR002379">
    <property type="entry name" value="ATPase_proteolipid_c-like_dom"/>
</dbReference>
<dbReference type="InterPro" id="IPR035921">
    <property type="entry name" value="F/V-ATP_Csub_sf"/>
</dbReference>
<dbReference type="NCBIfam" id="TIGR01260">
    <property type="entry name" value="ATP_synt_c"/>
    <property type="match status" value="1"/>
</dbReference>
<dbReference type="NCBIfam" id="NF005363">
    <property type="entry name" value="PRK06876.1"/>
    <property type="match status" value="1"/>
</dbReference>
<dbReference type="Pfam" id="PF00137">
    <property type="entry name" value="ATP-synt_C"/>
    <property type="match status" value="1"/>
</dbReference>
<dbReference type="PRINTS" id="PR00124">
    <property type="entry name" value="ATPASEC"/>
</dbReference>
<dbReference type="SUPFAM" id="SSF81333">
    <property type="entry name" value="F1F0 ATP synthase subunit C"/>
    <property type="match status" value="1"/>
</dbReference>
<dbReference type="PROSITE" id="PS00605">
    <property type="entry name" value="ATPASE_C"/>
    <property type="match status" value="1"/>
</dbReference>
<protein>
    <recommendedName>
        <fullName evidence="1">ATP synthase subunit c</fullName>
    </recommendedName>
    <alternativeName>
        <fullName evidence="1">ATP synthase F(0) sector subunit c</fullName>
    </alternativeName>
    <alternativeName>
        <fullName evidence="1">F-type ATPase subunit c</fullName>
        <shortName evidence="1">F-ATPase subunit c</shortName>
    </alternativeName>
    <alternativeName>
        <fullName evidence="1">Lipid-binding protein</fullName>
    </alternativeName>
</protein>
<keyword id="KW-0066">ATP synthesis</keyword>
<keyword id="KW-1003">Cell membrane</keyword>
<keyword id="KW-0138">CF(0)</keyword>
<keyword id="KW-0375">Hydrogen ion transport</keyword>
<keyword id="KW-0406">Ion transport</keyword>
<keyword id="KW-0446">Lipid-binding</keyword>
<keyword id="KW-0472">Membrane</keyword>
<keyword id="KW-1185">Reference proteome</keyword>
<keyword id="KW-0812">Transmembrane</keyword>
<keyword id="KW-1133">Transmembrane helix</keyword>
<keyword id="KW-0813">Transport</keyword>
<reference key="1">
    <citation type="journal article" date="2003" name="Proc. Natl. Acad. Sci. U.S.A.">
        <title>Complete genome sequence of Lactobacillus plantarum WCFS1.</title>
        <authorList>
            <person name="Kleerebezem M."/>
            <person name="Boekhorst J."/>
            <person name="van Kranenburg R."/>
            <person name="Molenaar D."/>
            <person name="Kuipers O.P."/>
            <person name="Leer R."/>
            <person name="Tarchini R."/>
            <person name="Peters S.A."/>
            <person name="Sandbrink H.M."/>
            <person name="Fiers M.W.E.J."/>
            <person name="Stiekema W."/>
            <person name="Klein Lankhorst R.M."/>
            <person name="Bron P.A."/>
            <person name="Hoffer S.M."/>
            <person name="Nierop Groot M.N."/>
            <person name="Kerkhoven R."/>
            <person name="De Vries M."/>
            <person name="Ursing B."/>
            <person name="De Vos W.M."/>
            <person name="Siezen R.J."/>
        </authorList>
    </citation>
    <scope>NUCLEOTIDE SEQUENCE [LARGE SCALE GENOMIC DNA]</scope>
    <source>
        <strain>ATCC BAA-793 / NCIMB 8826 / WCFS1</strain>
    </source>
</reference>
<reference key="2">
    <citation type="journal article" date="2012" name="J. Bacteriol.">
        <title>Complete resequencing and reannotation of the Lactobacillus plantarum WCFS1 genome.</title>
        <authorList>
            <person name="Siezen R.J."/>
            <person name="Francke C."/>
            <person name="Renckens B."/>
            <person name="Boekhorst J."/>
            <person name="Wels M."/>
            <person name="Kleerebezem M."/>
            <person name="van Hijum S.A."/>
        </authorList>
    </citation>
    <scope>NUCLEOTIDE SEQUENCE [LARGE SCALE GENOMIC DNA]</scope>
    <scope>GENOME REANNOTATION</scope>
    <source>
        <strain>ATCC BAA-793 / NCIMB 8826 / WCFS1</strain>
    </source>
</reference>